<protein>
    <recommendedName>
        <fullName evidence="1">DNA-directed RNA polymerase subunit beta</fullName>
        <shortName evidence="1">RNAP subunit beta</shortName>
        <ecNumber evidence="1">2.7.7.6</ecNumber>
    </recommendedName>
    <alternativeName>
        <fullName evidence="1">RNA polymerase subunit beta</fullName>
    </alternativeName>
    <alternativeName>
        <fullName evidence="1">Transcriptase subunit beta</fullName>
    </alternativeName>
</protein>
<gene>
    <name evidence="1" type="primary">rpoB</name>
    <name type="ordered locus">BQ2027_MB0686</name>
</gene>
<keyword id="KW-0240">DNA-directed RNA polymerase</keyword>
<keyword id="KW-0548">Nucleotidyltransferase</keyword>
<keyword id="KW-1185">Reference proteome</keyword>
<keyword id="KW-0804">Transcription</keyword>
<keyword id="KW-0808">Transferase</keyword>
<feature type="chain" id="PRO_0000047928" description="DNA-directed RNA polymerase subunit beta">
    <location>
        <begin position="1"/>
        <end position="1178"/>
    </location>
</feature>
<feature type="region of interest" description="Disordered" evidence="2">
    <location>
        <begin position="1"/>
        <end position="37"/>
    </location>
</feature>
<feature type="compositionally biased region" description="Low complexity" evidence="2">
    <location>
        <begin position="18"/>
        <end position="33"/>
    </location>
</feature>
<accession>P0A681</accession>
<accession>A0A1R3XW58</accession>
<accession>O08406</accession>
<accession>P47766</accession>
<accession>Q53424</accession>
<accession>Q59564</accession>
<accession>Q9X6Q3</accession>
<accession>Q9X6U9</accession>
<accession>Q9XC82</accession>
<accession>Q9XC83</accession>
<accession>Q9XC84</accession>
<accession>Q9XC85</accession>
<accession>X2BFU0</accession>
<reference key="1">
    <citation type="journal article" date="2003" name="Proc. Natl. Acad. Sci. U.S.A.">
        <title>The complete genome sequence of Mycobacterium bovis.</title>
        <authorList>
            <person name="Garnier T."/>
            <person name="Eiglmeier K."/>
            <person name="Camus J.-C."/>
            <person name="Medina N."/>
            <person name="Mansoor H."/>
            <person name="Pryor M."/>
            <person name="Duthoy S."/>
            <person name="Grondin S."/>
            <person name="Lacroix C."/>
            <person name="Monsempe C."/>
            <person name="Simon S."/>
            <person name="Harris B."/>
            <person name="Atkin R."/>
            <person name="Doggett J."/>
            <person name="Mayes R."/>
            <person name="Keating L."/>
            <person name="Wheeler P.R."/>
            <person name="Parkhill J."/>
            <person name="Barrell B.G."/>
            <person name="Cole S.T."/>
            <person name="Gordon S.V."/>
            <person name="Hewinson R.G."/>
        </authorList>
    </citation>
    <scope>NUCLEOTIDE SEQUENCE [LARGE SCALE GENOMIC DNA]</scope>
    <source>
        <strain>ATCC BAA-935 / AF2122/97</strain>
    </source>
</reference>
<reference key="2">
    <citation type="journal article" date="2017" name="Genome Announc.">
        <title>Updated reference genome sequence and annotation of Mycobacterium bovis AF2122/97.</title>
        <authorList>
            <person name="Malone K.M."/>
            <person name="Farrell D."/>
            <person name="Stuber T.P."/>
            <person name="Schubert O.T."/>
            <person name="Aebersold R."/>
            <person name="Robbe-Austerman S."/>
            <person name="Gordon S.V."/>
        </authorList>
    </citation>
    <scope>NUCLEOTIDE SEQUENCE [LARGE SCALE GENOMIC DNA]</scope>
    <scope>GENOME REANNOTATION</scope>
    <source>
        <strain>ATCC BAA-935 / AF2122/97</strain>
    </source>
</reference>
<sequence>MLEGCILADSRQSKTAASPSPSRPQSSSNNSVPGAPNRVSFAKLREPLEVPGLLDVQTDSFEWLIGSPRWRESAAERGDVNPVGGLEEVLYELSPIEDFSGSMSLSFSDPRFDDVKAPVDECKDKDMTYAAPLFVTAEFINNNTGEIKSQTVFMGDFPMMTEKGTFIINGTERVVVSQLVRSPGVYFDETIDKSTDKTLHSVKVIPSRGAWLEFDVDKRDTVGVRIDRKRRQPVTVLLKALGWTSEQIVERFGFSEIMRSTLEKDNTVGTDEALLDIYRKLRPGEPPTKESAQTLLENLFFKEKRYDLARVGRYKVNKKLGLHVGEPITSSTLTEEDVVATIEYLVRLHEGQTTMTVPGGVEVPVETDDIDHFGNRRLRTVGELIQNQIRVGMSRMERVVRERMTTQDVEAITPQTLINIRPVVAAIKEFFGTSQLSQFMDQNNPLSGLTHKRRLSALGPGGLSRERAGLEVRDVHPSHYGRMCPIETPEGPNIGLIGSLSVYARVNPFGFIETPYRKVVDGVVSDEIVYLTADEEDRHVVAQANSPIDADGRFVEPRVLVRRKAGEVEYVPSSEVDYMDVSPRQMVSVATAMIPFLEHDDANRALMGANMQRQAVPLVRSEAPLVGTGMELRAAIDAGDVVVAEESGVIEEVSADYITVMHDNGTRRTYRMRKFARSNHGTCANQCPIVDAGDRVEAGQVIADGPCTDDGEMALGKNLLVAIMPWEGHNYEDAIILSNRLVEEDVLTSIHIEEHEIDARDTKLGAEEITRDIPNISDEVLADLDERGIVRIGAEVRDGDILVGKVTPKGETELTPEERLLRAIFGEKAREVRDTSLKVPHGESGKVIGIRVFSREDEDELPAGVNELVRVYVAQKRKISDGDKLAGRHGNKGVIGKILPVEDMPFLADGTPVDIILNTHGVPRRMNIGQILETHLGWCAHSGWKVDAAKGVPDWAARLPDELLEAQPNAIVSTPVFDGAQEAELQGLLSCTLPNRDGDVLVDADGKAMLFDGRSGEPFPYPVTVGYMYIMKLHHLVDDKIHARSTGPYSMITQQPLGGKAQFGGQRFGEMECWAMQAYGAAYTLQELLTIKSDDTVGRVKVYEAIVKGENIPEPGIPESFKVLLKELQSLCLNVEVLSSDGAAIELREGEDEDLERAAANLGINLSRNESASVEDLA</sequence>
<proteinExistence type="inferred from homology"/>
<evidence type="ECO:0000255" key="1">
    <source>
        <dbReference type="HAMAP-Rule" id="MF_01321"/>
    </source>
</evidence>
<evidence type="ECO:0000256" key="2">
    <source>
        <dbReference type="SAM" id="MobiDB-lite"/>
    </source>
</evidence>
<evidence type="ECO:0000305" key="3"/>
<name>RPOB_MYCBO</name>
<organism>
    <name type="scientific">Mycobacterium bovis (strain ATCC BAA-935 / AF2122/97)</name>
    <dbReference type="NCBI Taxonomy" id="233413"/>
    <lineage>
        <taxon>Bacteria</taxon>
        <taxon>Bacillati</taxon>
        <taxon>Actinomycetota</taxon>
        <taxon>Actinomycetes</taxon>
        <taxon>Mycobacteriales</taxon>
        <taxon>Mycobacteriaceae</taxon>
        <taxon>Mycobacterium</taxon>
        <taxon>Mycobacterium tuberculosis complex</taxon>
    </lineage>
</organism>
<comment type="function">
    <text evidence="1">DNA-dependent RNA polymerase catalyzes the transcription of DNA into RNA using the four ribonucleoside triphosphates as substrates.</text>
</comment>
<comment type="catalytic activity">
    <reaction evidence="1">
        <text>RNA(n) + a ribonucleoside 5'-triphosphate = RNA(n+1) + diphosphate</text>
        <dbReference type="Rhea" id="RHEA:21248"/>
        <dbReference type="Rhea" id="RHEA-COMP:14527"/>
        <dbReference type="Rhea" id="RHEA-COMP:17342"/>
        <dbReference type="ChEBI" id="CHEBI:33019"/>
        <dbReference type="ChEBI" id="CHEBI:61557"/>
        <dbReference type="ChEBI" id="CHEBI:140395"/>
        <dbReference type="EC" id="2.7.7.6"/>
    </reaction>
</comment>
<comment type="subunit">
    <text evidence="1">The RNAP catalytic core consists of 2 alpha, 1 beta, 1 beta' and 1 omega subunit. When a sigma factor is associated with the core the holoenzyme is formed, which can initiate transcription.</text>
</comment>
<comment type="similarity">
    <text evidence="1">Belongs to the RNA polymerase beta chain family.</text>
</comment>
<comment type="sequence caution" evidence="3">
    <conflict type="erroneous initiation">
        <sequence resource="EMBL-CDS" id="SIT99284"/>
    </conflict>
    <text>Truncated N-terminus.</text>
</comment>
<dbReference type="EC" id="2.7.7.6" evidence="1"/>
<dbReference type="EMBL" id="LT708304">
    <property type="protein sequence ID" value="SIT99284.1"/>
    <property type="status" value="ALT_INIT"/>
    <property type="molecule type" value="Genomic_DNA"/>
</dbReference>
<dbReference type="RefSeq" id="NP_854344.1">
    <property type="nucleotide sequence ID" value="NC_002945.3"/>
</dbReference>
<dbReference type="SMR" id="P0A681"/>
<dbReference type="KEGG" id="mbo:BQ2027_MB0686"/>
<dbReference type="PATRIC" id="fig|233413.5.peg.746"/>
<dbReference type="Proteomes" id="UP000001419">
    <property type="component" value="Chromosome"/>
</dbReference>
<dbReference type="GO" id="GO:0000428">
    <property type="term" value="C:DNA-directed RNA polymerase complex"/>
    <property type="evidence" value="ECO:0007669"/>
    <property type="project" value="UniProtKB-KW"/>
</dbReference>
<dbReference type="GO" id="GO:0003677">
    <property type="term" value="F:DNA binding"/>
    <property type="evidence" value="ECO:0007669"/>
    <property type="project" value="UniProtKB-UniRule"/>
</dbReference>
<dbReference type="GO" id="GO:0003899">
    <property type="term" value="F:DNA-directed RNA polymerase activity"/>
    <property type="evidence" value="ECO:0007669"/>
    <property type="project" value="UniProtKB-UniRule"/>
</dbReference>
<dbReference type="GO" id="GO:0032549">
    <property type="term" value="F:ribonucleoside binding"/>
    <property type="evidence" value="ECO:0007669"/>
    <property type="project" value="InterPro"/>
</dbReference>
<dbReference type="GO" id="GO:0006351">
    <property type="term" value="P:DNA-templated transcription"/>
    <property type="evidence" value="ECO:0007669"/>
    <property type="project" value="UniProtKB-UniRule"/>
</dbReference>
<dbReference type="CDD" id="cd00653">
    <property type="entry name" value="RNA_pol_B_RPB2"/>
    <property type="match status" value="1"/>
</dbReference>
<dbReference type="FunFam" id="3.90.1800.10:FF:000005">
    <property type="entry name" value="DNA-directed RNA polymerase subunit beta"/>
    <property type="match status" value="1"/>
</dbReference>
<dbReference type="Gene3D" id="2.40.50.100">
    <property type="match status" value="1"/>
</dbReference>
<dbReference type="Gene3D" id="2.40.50.150">
    <property type="match status" value="1"/>
</dbReference>
<dbReference type="Gene3D" id="3.90.1100.10">
    <property type="match status" value="1"/>
</dbReference>
<dbReference type="Gene3D" id="2.30.150.10">
    <property type="entry name" value="DNA-directed RNA polymerase, beta subunit, external 1 domain"/>
    <property type="match status" value="1"/>
</dbReference>
<dbReference type="Gene3D" id="2.40.270.10">
    <property type="entry name" value="DNA-directed RNA polymerase, subunit 2, domain 6"/>
    <property type="match status" value="1"/>
</dbReference>
<dbReference type="Gene3D" id="3.90.1800.10">
    <property type="entry name" value="RNA polymerase alpha subunit dimerisation domain"/>
    <property type="match status" value="1"/>
</dbReference>
<dbReference type="Gene3D" id="3.90.1110.10">
    <property type="entry name" value="RNA polymerase Rpb2, domain 2"/>
    <property type="match status" value="1"/>
</dbReference>
<dbReference type="HAMAP" id="MF_01321">
    <property type="entry name" value="RNApol_bact_RpoB"/>
    <property type="match status" value="1"/>
</dbReference>
<dbReference type="InterPro" id="IPR042107">
    <property type="entry name" value="DNA-dir_RNA_pol_bsu_ext_1_sf"/>
</dbReference>
<dbReference type="InterPro" id="IPR019462">
    <property type="entry name" value="DNA-dir_RNA_pol_bsu_external_1"/>
</dbReference>
<dbReference type="InterPro" id="IPR015712">
    <property type="entry name" value="DNA-dir_RNA_pol_su2"/>
</dbReference>
<dbReference type="InterPro" id="IPR007120">
    <property type="entry name" value="DNA-dir_RNAP_su2_dom"/>
</dbReference>
<dbReference type="InterPro" id="IPR037033">
    <property type="entry name" value="DNA-dir_RNAP_su2_hyb_sf"/>
</dbReference>
<dbReference type="InterPro" id="IPR010243">
    <property type="entry name" value="RNA_pol_bsu_bac"/>
</dbReference>
<dbReference type="InterPro" id="IPR007121">
    <property type="entry name" value="RNA_pol_bsu_CS"/>
</dbReference>
<dbReference type="InterPro" id="IPR007644">
    <property type="entry name" value="RNA_pol_bsu_protrusion"/>
</dbReference>
<dbReference type="InterPro" id="IPR007642">
    <property type="entry name" value="RNA_pol_Rpb2_2"/>
</dbReference>
<dbReference type="InterPro" id="IPR037034">
    <property type="entry name" value="RNA_pol_Rpb2_2_sf"/>
</dbReference>
<dbReference type="InterPro" id="IPR007645">
    <property type="entry name" value="RNA_pol_Rpb2_3"/>
</dbReference>
<dbReference type="InterPro" id="IPR007641">
    <property type="entry name" value="RNA_pol_Rpb2_7"/>
</dbReference>
<dbReference type="InterPro" id="IPR014724">
    <property type="entry name" value="RNA_pol_RPB2_OB-fold"/>
</dbReference>
<dbReference type="NCBIfam" id="NF001616">
    <property type="entry name" value="PRK00405.1"/>
    <property type="match status" value="1"/>
</dbReference>
<dbReference type="NCBIfam" id="TIGR02013">
    <property type="entry name" value="rpoB"/>
    <property type="match status" value="1"/>
</dbReference>
<dbReference type="PANTHER" id="PTHR20856">
    <property type="entry name" value="DNA-DIRECTED RNA POLYMERASE I SUBUNIT 2"/>
    <property type="match status" value="1"/>
</dbReference>
<dbReference type="Pfam" id="PF04563">
    <property type="entry name" value="RNA_pol_Rpb2_1"/>
    <property type="match status" value="1"/>
</dbReference>
<dbReference type="Pfam" id="PF04561">
    <property type="entry name" value="RNA_pol_Rpb2_2"/>
    <property type="match status" value="1"/>
</dbReference>
<dbReference type="Pfam" id="PF04565">
    <property type="entry name" value="RNA_pol_Rpb2_3"/>
    <property type="match status" value="1"/>
</dbReference>
<dbReference type="Pfam" id="PF10385">
    <property type="entry name" value="RNA_pol_Rpb2_45"/>
    <property type="match status" value="1"/>
</dbReference>
<dbReference type="Pfam" id="PF00562">
    <property type="entry name" value="RNA_pol_Rpb2_6"/>
    <property type="match status" value="1"/>
</dbReference>
<dbReference type="Pfam" id="PF04560">
    <property type="entry name" value="RNA_pol_Rpb2_7"/>
    <property type="match status" value="1"/>
</dbReference>
<dbReference type="SUPFAM" id="SSF64484">
    <property type="entry name" value="beta and beta-prime subunits of DNA dependent RNA-polymerase"/>
    <property type="match status" value="1"/>
</dbReference>
<dbReference type="PROSITE" id="PS01166">
    <property type="entry name" value="RNA_POL_BETA"/>
    <property type="match status" value="1"/>
</dbReference>